<comment type="function">
    <text evidence="1">Ornithine decarboxylase (ODC) antizyme protein that negatively regulates ODC activity and intracellular polyamine biosynthesis and uptake in response to increased intracellular polyamine levels. Binds to ODC monomers, inhibiting the assembly of the functional ODC homodimer, and targets the monomers for ubiquitin-independent proteolytic destruction by the 26S proteasome.</text>
</comment>
<comment type="subunit">
    <text evidence="1">Interacts with ODC1 and thereby sterically blocks ODC homodimerization.</text>
</comment>
<comment type="alternative products">
    <event type="ribosomal frameshifting"/>
    <isoform>
        <id>O44535-1</id>
        <name>1</name>
        <sequence type="displayed"/>
    </isoform>
    <text>A ribosomal frameshift occurs between the codons for Ser-1 and Asp-2. An autoregulatory mechanism enables modulation of frameshifting according to the cellular concentration of polyamines.</text>
</comment>
<comment type="similarity">
    <text evidence="3">Belongs to the ODC antizyme family.</text>
</comment>
<name>OAZ_DROVI</name>
<proteinExistence type="inferred from homology"/>
<organism>
    <name type="scientific">Drosophila virilis</name>
    <name type="common">Fruit fly</name>
    <dbReference type="NCBI Taxonomy" id="7244"/>
    <lineage>
        <taxon>Eukaryota</taxon>
        <taxon>Metazoa</taxon>
        <taxon>Ecdysozoa</taxon>
        <taxon>Arthropoda</taxon>
        <taxon>Hexapoda</taxon>
        <taxon>Insecta</taxon>
        <taxon>Pterygota</taxon>
        <taxon>Neoptera</taxon>
        <taxon>Endopterygota</taxon>
        <taxon>Diptera</taxon>
        <taxon>Brachycera</taxon>
        <taxon>Muscomorpha</taxon>
        <taxon>Ephydroidea</taxon>
        <taxon>Drosophilidae</taxon>
        <taxon>Drosophila</taxon>
    </lineage>
</organism>
<accession>O44535</accession>
<evidence type="ECO:0000250" key="1">
    <source>
        <dbReference type="UniProtKB" id="P54368"/>
    </source>
</evidence>
<evidence type="ECO:0000256" key="2">
    <source>
        <dbReference type="SAM" id="MobiDB-lite"/>
    </source>
</evidence>
<evidence type="ECO:0000305" key="3"/>
<gene>
    <name type="primary">Oda</name>
    <name type="synonym">guf</name>
</gene>
<keyword id="KW-0217">Developmental protein</keyword>
<keyword id="KW-0688">Ribosomal frameshifting</keyword>
<dbReference type="EMBL" id="AF038872">
    <property type="protein sequence ID" value="AAB95482.1"/>
    <property type="status" value="ALT_SEQ"/>
    <property type="molecule type" value="Genomic_DNA"/>
</dbReference>
<dbReference type="SMR" id="O44535"/>
<dbReference type="OrthoDB" id="5959761at2759"/>
<dbReference type="ChiTaRS" id="Oda">
    <property type="organism name" value="fly"/>
</dbReference>
<dbReference type="GO" id="GO:0005737">
    <property type="term" value="C:cytoplasm"/>
    <property type="evidence" value="ECO:0007669"/>
    <property type="project" value="TreeGrafter"/>
</dbReference>
<dbReference type="GO" id="GO:0005634">
    <property type="term" value="C:nucleus"/>
    <property type="evidence" value="ECO:0007669"/>
    <property type="project" value="TreeGrafter"/>
</dbReference>
<dbReference type="GO" id="GO:0008073">
    <property type="term" value="F:ornithine decarboxylase inhibitor activity"/>
    <property type="evidence" value="ECO:0007669"/>
    <property type="project" value="InterPro"/>
</dbReference>
<dbReference type="GO" id="GO:0045732">
    <property type="term" value="P:positive regulation of protein catabolic process"/>
    <property type="evidence" value="ECO:0007669"/>
    <property type="project" value="TreeGrafter"/>
</dbReference>
<dbReference type="GO" id="GO:0075523">
    <property type="term" value="P:viral translational frameshifting"/>
    <property type="evidence" value="ECO:0007669"/>
    <property type="project" value="UniProtKB-KW"/>
</dbReference>
<dbReference type="Gene3D" id="3.40.630.60">
    <property type="match status" value="1"/>
</dbReference>
<dbReference type="InterPro" id="IPR016181">
    <property type="entry name" value="Acyl_CoA_acyltransferase"/>
</dbReference>
<dbReference type="InterPro" id="IPR002993">
    <property type="entry name" value="ODC_AZ"/>
</dbReference>
<dbReference type="InterPro" id="IPR038581">
    <property type="entry name" value="ODC_AZ_sf"/>
</dbReference>
<dbReference type="PANTHER" id="PTHR10279">
    <property type="entry name" value="ORNITHINE DECARBOXYLASE ANTIZYME"/>
    <property type="match status" value="1"/>
</dbReference>
<dbReference type="PANTHER" id="PTHR10279:SF10">
    <property type="entry name" value="ORNITHINE DECARBOXYLASE ANTIZYME"/>
    <property type="match status" value="1"/>
</dbReference>
<dbReference type="SUPFAM" id="SSF55729">
    <property type="entry name" value="Acyl-CoA N-acyltransferases (Nat)"/>
    <property type="match status" value="1"/>
</dbReference>
<reference key="1">
    <citation type="journal article" date="1998" name="Mol. Cell. Biol.">
        <title>The Drosophila gene for antizyme requires ribosomal frameshifting for expression and contains an intronic gene for snRNP Sm D3 on the opposite strand.</title>
        <authorList>
            <person name="Ivanov I.P."/>
            <person name="Simin K."/>
            <person name="Letsou A."/>
            <person name="Atkins J.F."/>
            <person name="Gesteland R.F."/>
        </authorList>
    </citation>
    <scope>NUCLEOTIDE SEQUENCE [GENOMIC DNA]</scope>
</reference>
<feature type="chain" id="PRO_0000220863" description="Ornithine decarboxylase antizyme">
    <location>
        <begin position="1" status="less than"/>
        <end position="130" status="greater than"/>
    </location>
</feature>
<feature type="region of interest" description="Disordered" evidence="2">
    <location>
        <begin position="1"/>
        <end position="56"/>
    </location>
</feature>
<feature type="compositionally biased region" description="Basic and acidic residues" evidence="2">
    <location>
        <begin position="1"/>
        <end position="14"/>
    </location>
</feature>
<feature type="compositionally biased region" description="Polar residues" evidence="2">
    <location>
        <begin position="17"/>
        <end position="27"/>
    </location>
</feature>
<feature type="compositionally biased region" description="Low complexity" evidence="2">
    <location>
        <begin position="32"/>
        <end position="51"/>
    </location>
</feature>
<feature type="non-terminal residue">
    <location>
        <position position="1"/>
    </location>
</feature>
<feature type="non-terminal residue">
    <location>
        <position position="130"/>
    </location>
</feature>
<sequence length="130" mass="14126">SDVPVHHRTDHDRASLLTGSSRKSSVDSAGGSLFEASSRASSPSSSSSSECSDTESHDIHSLCSEDDCQEVLRQILQHDQPVHISIKLHVTEDQSTNWMSILNPNNNILYVAFPTDFAPAGSKETFTSLL</sequence>
<protein>
    <recommendedName>
        <fullName>Ornithine decarboxylase antizyme</fullName>
        <shortName>ODC-Az</shortName>
    </recommendedName>
    <alternativeName>
        <fullName>Protein gutfeeling</fullName>
    </alternativeName>
</protein>